<dbReference type="EC" id="4.1.1.50" evidence="1"/>
<dbReference type="EMBL" id="CP000878">
    <property type="protein sequence ID" value="ABX09623.1"/>
    <property type="molecule type" value="Genomic_DNA"/>
</dbReference>
<dbReference type="SMR" id="A9BCR1"/>
<dbReference type="STRING" id="93059.P9211_16921"/>
<dbReference type="KEGG" id="pmj:P9211_16921"/>
<dbReference type="eggNOG" id="COG1586">
    <property type="taxonomic scope" value="Bacteria"/>
</dbReference>
<dbReference type="HOGENOM" id="CLU_125470_2_3_3"/>
<dbReference type="UniPathway" id="UPA00331">
    <property type="reaction ID" value="UER00451"/>
</dbReference>
<dbReference type="Proteomes" id="UP000000788">
    <property type="component" value="Chromosome"/>
</dbReference>
<dbReference type="GO" id="GO:0005829">
    <property type="term" value="C:cytosol"/>
    <property type="evidence" value="ECO:0007669"/>
    <property type="project" value="TreeGrafter"/>
</dbReference>
<dbReference type="GO" id="GO:0004014">
    <property type="term" value="F:adenosylmethionine decarboxylase activity"/>
    <property type="evidence" value="ECO:0007669"/>
    <property type="project" value="UniProtKB-UniRule"/>
</dbReference>
<dbReference type="GO" id="GO:0008295">
    <property type="term" value="P:spermidine biosynthetic process"/>
    <property type="evidence" value="ECO:0007669"/>
    <property type="project" value="UniProtKB-UniRule"/>
</dbReference>
<dbReference type="Gene3D" id="3.30.160.750">
    <property type="match status" value="1"/>
</dbReference>
<dbReference type="Gene3D" id="3.30.360.110">
    <property type="entry name" value="S-adenosylmethionine decarboxylase domain"/>
    <property type="match status" value="1"/>
</dbReference>
<dbReference type="HAMAP" id="MF_00464">
    <property type="entry name" value="AdoMetDC_1"/>
    <property type="match status" value="1"/>
</dbReference>
<dbReference type="InterPro" id="IPR042286">
    <property type="entry name" value="AdoMetDC_C"/>
</dbReference>
<dbReference type="InterPro" id="IPR003826">
    <property type="entry name" value="AdoMetDC_fam_prok"/>
</dbReference>
<dbReference type="InterPro" id="IPR042284">
    <property type="entry name" value="AdoMetDC_N"/>
</dbReference>
<dbReference type="InterPro" id="IPR016067">
    <property type="entry name" value="S-AdoMet_deCO2ase_core"/>
</dbReference>
<dbReference type="InterPro" id="IPR017716">
    <property type="entry name" value="S-AdoMet_deCOase_pro-enz"/>
</dbReference>
<dbReference type="NCBIfam" id="TIGR03330">
    <property type="entry name" value="SAM_DCase_Bsu"/>
    <property type="match status" value="1"/>
</dbReference>
<dbReference type="PANTHER" id="PTHR33866">
    <property type="entry name" value="S-ADENOSYLMETHIONINE DECARBOXYLASE PROENZYME"/>
    <property type="match status" value="1"/>
</dbReference>
<dbReference type="PANTHER" id="PTHR33866:SF2">
    <property type="entry name" value="S-ADENOSYLMETHIONINE DECARBOXYLASE PROENZYME"/>
    <property type="match status" value="1"/>
</dbReference>
<dbReference type="Pfam" id="PF02675">
    <property type="entry name" value="AdoMet_dc"/>
    <property type="match status" value="1"/>
</dbReference>
<dbReference type="SUPFAM" id="SSF56276">
    <property type="entry name" value="S-adenosylmethionine decarboxylase"/>
    <property type="match status" value="1"/>
</dbReference>
<protein>
    <recommendedName>
        <fullName evidence="1">S-adenosylmethionine decarboxylase proenzyme</fullName>
        <shortName evidence="1">AdoMetDC</shortName>
        <shortName evidence="1">SAMDC</shortName>
        <ecNumber evidence="1">4.1.1.50</ecNumber>
    </recommendedName>
    <component>
        <recommendedName>
            <fullName evidence="1">S-adenosylmethionine decarboxylase beta chain</fullName>
        </recommendedName>
    </component>
    <component>
        <recommendedName>
            <fullName evidence="1">S-adenosylmethionine decarboxylase alpha chain</fullName>
        </recommendedName>
    </component>
</protein>
<name>SPEH_PROM4</name>
<organism>
    <name type="scientific">Prochlorococcus marinus (strain MIT 9211)</name>
    <dbReference type="NCBI Taxonomy" id="93059"/>
    <lineage>
        <taxon>Bacteria</taxon>
        <taxon>Bacillati</taxon>
        <taxon>Cyanobacteriota</taxon>
        <taxon>Cyanophyceae</taxon>
        <taxon>Synechococcales</taxon>
        <taxon>Prochlorococcaceae</taxon>
        <taxon>Prochlorococcus</taxon>
    </lineage>
</organism>
<evidence type="ECO:0000255" key="1">
    <source>
        <dbReference type="HAMAP-Rule" id="MF_00464"/>
    </source>
</evidence>
<comment type="function">
    <text evidence="1">Catalyzes the decarboxylation of S-adenosylmethionine to S-adenosylmethioninamine (dcAdoMet), the propylamine donor required for the synthesis of the polyamines spermine and spermidine from the diamine putrescine.</text>
</comment>
<comment type="catalytic activity">
    <reaction evidence="1">
        <text>S-adenosyl-L-methionine + H(+) = S-adenosyl 3-(methylsulfanyl)propylamine + CO2</text>
        <dbReference type="Rhea" id="RHEA:15981"/>
        <dbReference type="ChEBI" id="CHEBI:15378"/>
        <dbReference type="ChEBI" id="CHEBI:16526"/>
        <dbReference type="ChEBI" id="CHEBI:57443"/>
        <dbReference type="ChEBI" id="CHEBI:59789"/>
        <dbReference type="EC" id="4.1.1.50"/>
    </reaction>
</comment>
<comment type="cofactor">
    <cofactor evidence="1">
        <name>pyruvate</name>
        <dbReference type="ChEBI" id="CHEBI:15361"/>
    </cofactor>
    <text evidence="1">Binds 1 pyruvoyl group covalently per subunit.</text>
</comment>
<comment type="pathway">
    <text evidence="1">Amine and polyamine biosynthesis; S-adenosylmethioninamine biosynthesis; S-adenosylmethioninamine from S-adenosyl-L-methionine: step 1/1.</text>
</comment>
<comment type="subunit">
    <text evidence="1">Heterotetramer of two alpha and two beta chains arranged as a dimer of alpha/beta heterodimers.</text>
</comment>
<comment type="PTM">
    <text evidence="1">Is synthesized initially as an inactive proenzyme. Formation of the active enzyme involves a self-maturation process in which the active site pyruvoyl group is generated from an internal serine residue via an autocatalytic post-translational modification. Two non-identical subunits are generated from the proenzyme in this reaction, and the pyruvate is formed at the N-terminus of the alpha chain, which is derived from the carboxyl end of the proenzyme. The post-translation cleavage follows an unusual pathway, termed non-hydrolytic serinolysis, in which the side chain hydroxyl group of the serine supplies its oxygen atom to form the C-terminus of the beta chain, while the remainder of the serine residue undergoes an oxidative deamination to produce ammonia and the pyruvoyl group blocking the N-terminus of the alpha chain.</text>
</comment>
<comment type="similarity">
    <text evidence="1">Belongs to the prokaryotic AdoMetDC family. Type 1 subfamily.</text>
</comment>
<proteinExistence type="inferred from homology"/>
<feature type="chain" id="PRO_1000193195" description="S-adenosylmethionine decarboxylase beta chain" evidence="1">
    <location>
        <begin position="1"/>
        <end position="60"/>
    </location>
</feature>
<feature type="chain" id="PRO_1000193196" description="S-adenosylmethionine decarboxylase alpha chain" evidence="1">
    <location>
        <begin position="61"/>
        <end position="122"/>
    </location>
</feature>
<feature type="active site" description="Schiff-base intermediate with substrate; via pyruvic acid" evidence="1">
    <location>
        <position position="61"/>
    </location>
</feature>
<feature type="active site" description="Proton acceptor; for processing activity" evidence="1">
    <location>
        <position position="66"/>
    </location>
</feature>
<feature type="active site" description="Proton donor; for catalytic activity" evidence="1">
    <location>
        <position position="81"/>
    </location>
</feature>
<feature type="site" description="Cleavage (non-hydrolytic); by autolysis" evidence="1">
    <location>
        <begin position="60"/>
        <end position="61"/>
    </location>
</feature>
<feature type="modified residue" description="Pyruvic acid (Ser); by autocatalysis" evidence="1">
    <location>
        <position position="61"/>
    </location>
</feature>
<keyword id="KW-0068">Autocatalytic cleavage</keyword>
<keyword id="KW-0210">Decarboxylase</keyword>
<keyword id="KW-0456">Lyase</keyword>
<keyword id="KW-0620">Polyamine biosynthesis</keyword>
<keyword id="KW-0670">Pyruvate</keyword>
<keyword id="KW-1185">Reference proteome</keyword>
<keyword id="KW-0949">S-adenosyl-L-methionine</keyword>
<keyword id="KW-0704">Schiff base</keyword>
<keyword id="KW-0745">Spermidine biosynthesis</keyword>
<keyword id="KW-0865">Zymogen</keyword>
<accession>A9BCR1</accession>
<reference key="1">
    <citation type="journal article" date="2007" name="PLoS Genet.">
        <title>Patterns and implications of gene gain and loss in the evolution of Prochlorococcus.</title>
        <authorList>
            <person name="Kettler G.C."/>
            <person name="Martiny A.C."/>
            <person name="Huang K."/>
            <person name="Zucker J."/>
            <person name="Coleman M.L."/>
            <person name="Rodrigue S."/>
            <person name="Chen F."/>
            <person name="Lapidus A."/>
            <person name="Ferriera S."/>
            <person name="Johnson J."/>
            <person name="Steglich C."/>
            <person name="Church G.M."/>
            <person name="Richardson P."/>
            <person name="Chisholm S.W."/>
        </authorList>
    </citation>
    <scope>NUCLEOTIDE SEQUENCE [LARGE SCALE GENOMIC DNA]</scope>
    <source>
        <strain>MIT 9211</strain>
    </source>
</reference>
<sequence length="122" mass="13434">MIGKHCILELCECNSVKLDDEAFIRTTIQMASKVAGAQLLNLITHKFVPQGVTGLALLAESHISIHTWPESGYAAVDVFTCGDQTMPDKACQLLVEELQSKRHSLKTLRRDTPVMISNALIN</sequence>
<gene>
    <name evidence="1" type="primary">speH</name>
    <name type="ordered locus">P9211_16921</name>
</gene>